<sequence>MSNSSNSTSLSNFSGIGVGVILTLVILFILILALLCLRVAACCTHVCTYCQLFKRWGQHPR</sequence>
<proteinExistence type="evidence at protein level"/>
<feature type="chain" id="PRO_0000421688" description="Early 3 Conserved Region 1-alpha protein">
    <location>
        <begin position="1"/>
        <end position="61"/>
    </location>
</feature>
<feature type="topological domain" description="Lumenal">
    <location>
        <begin position="1"/>
        <end position="14"/>
    </location>
</feature>
<feature type="transmembrane region" description="Helical" evidence="1">
    <location>
        <begin position="15"/>
        <end position="35"/>
    </location>
</feature>
<feature type="topological domain" description="Cytoplasmic">
    <location>
        <begin position="36"/>
        <end position="61"/>
    </location>
</feature>
<feature type="glycosylation site" description="N-linked (GlcNAc...) asparagine; by host" evidence="1">
    <location>
        <position position="3"/>
    </location>
</feature>
<feature type="glycosylation site" description="N-linked (GlcNAc...) asparagine; by host" evidence="1">
    <location>
        <position position="6"/>
    </location>
</feature>
<feature type="glycosylation site" description="N-linked (GlcNAc...) asparagine; by host" evidence="1">
    <location>
        <position position="12"/>
    </location>
</feature>
<accession>Q910M3</accession>
<comment type="function">
    <text evidence="3 4">Prevents infected cell apoptosis induced by the host immune system. May act by down-regulating host TRAIL receptors. May act in complex with E3 RID alpha and beta. May play a role on cellular apoptosis regulation in the ER.</text>
</comment>
<comment type="subunit">
    <text evidence="2">Interacts with E3 RID alpha and E3 RID beta.</text>
</comment>
<comment type="subcellular location">
    <subcellularLocation>
        <location>Host endoplasmic reticulum membrane</location>
        <topology>Single-pass membrane protein</topology>
    </subcellularLocation>
    <subcellularLocation>
        <location>Host cell membrane</location>
        <topology>Single-pass membrane protein</topology>
    </subcellularLocation>
</comment>
<comment type="PTM">
    <text evidence="5">Only 1 of 3 three potential glycosylation sites is glycosylated. Oligosaccharides are not processed from high mannose to the complex type because the protein is retained in the endoplasmic reticulum.</text>
</comment>
<comment type="similarity">
    <text evidence="6">Belongs to the adenoviridae E3-CR1 family.</text>
</comment>
<name>E3CR1_ADE02</name>
<reference key="1">
    <citation type="submission" date="2000-09" db="EMBL/GenBank/DDBJ databases">
        <title>Adenoviruses of subgenus c with different organ tropism.</title>
        <authorList>
            <person name="Borcherding F."/>
            <person name="Pring-Akerblom P."/>
        </authorList>
    </citation>
    <scope>NUCLEOTIDE SEQUENCE [GENOMIC DNA]</scope>
    <source>
        <strain>134</strain>
        <strain>352</strain>
        <strain>358</strain>
        <strain>Prei</strain>
        <strain>R05</strain>
    </source>
</reference>
<reference key="2">
    <citation type="journal article" date="1990" name="Virology">
        <title>A 6700 MW membrane protein is encoded by region E3 of adenovirus type 2.</title>
        <authorList>
            <person name="Wilson-Rawls J."/>
            <person name="Saha S.K."/>
            <person name="Krajcsi P."/>
            <person name="Tollefson A.E."/>
            <person name="Gooding L.R."/>
            <person name="Wold W.S."/>
        </authorList>
    </citation>
    <scope>CHARACTERIZATION</scope>
</reference>
<reference key="3">
    <citation type="journal article" date="1993" name="Virology">
        <title>The E3-6.7K protein of adenovirus is an Asn-linked integral membrane glycoprotein localized in the endoplasmic reticulum.</title>
        <authorList>
            <person name="Wilson-Rawls J."/>
            <person name="Wold W.S."/>
        </authorList>
    </citation>
    <scope>SUBCELLULAR LOCATION</scope>
    <scope>GLYCOSYLATION</scope>
</reference>
<reference key="4">
    <citation type="journal article" date="2001" name="J. Biol. Chem.">
        <title>Three adenovirus E3 proteins cooperate to evade apoptosis by tumor necrosis factor-related apoptosis-inducing ligand receptor-1 and -2.</title>
        <authorList>
            <person name="Benedict C.A."/>
            <person name="Norris P.S."/>
            <person name="Prigozy T.I."/>
            <person name="Bodmer J.L."/>
            <person name="Mahr J.A."/>
            <person name="Garnett C.T."/>
            <person name="Martinon F."/>
            <person name="Tschopp J."/>
            <person name="Gooding L.R."/>
            <person name="Ware C.F."/>
        </authorList>
    </citation>
    <scope>INTERACTION WITH E3 RID ALPHA AND E3 RID BETA</scope>
    <scope>SUBCELLULAR LOCATION</scope>
</reference>
<reference key="5">
    <citation type="journal article" date="2004" name="J. Virol.">
        <title>Adenovirus E3-6.7K protein is required in conjunction with the E3-RID protein complex for the internalization and degradation of TRAIL receptor 2.</title>
        <authorList>
            <person name="Lichtenstein D.L."/>
            <person name="Doronin K."/>
            <person name="Toth K."/>
            <person name="Kuppuswamy M."/>
            <person name="Wold W.S."/>
            <person name="Tollefson A.E."/>
        </authorList>
    </citation>
    <scope>FUNCTION</scope>
</reference>
<reference key="6">
    <citation type="journal article" date="2007" name="Clin. Vaccine Immunol.">
        <title>Identification of a novel immunosubversion mechanism mediated by a virologue of the B-lymphocyte receptor TACI.</title>
        <authorList>
            <person name="Grant J.R."/>
            <person name="Moise A.R."/>
            <person name="Jefferies W.A."/>
        </authorList>
    </citation>
    <scope>FUNCTION</scope>
</reference>
<reference key="7">
    <citation type="journal article" date="2004" name="Int. Rev. Immunol.">
        <title>Functions and mechanisms of action of the adenovirus E3 proteins.</title>
        <authorList>
            <person name="Lichtenstein D.L."/>
            <person name="Toth K."/>
            <person name="Doronin K."/>
            <person name="Tollefson A.E."/>
            <person name="Wold W.S."/>
        </authorList>
    </citation>
    <scope>REVIEW</scope>
</reference>
<reference key="8">
    <citation type="journal article" date="2004" name="Curr. Top. Microbiol. Immunol.">
        <title>Immune evasion by adenovirus E3 proteins: exploitation of intracellular trafficking pathways.</title>
        <authorList>
            <person name="Windheim M."/>
            <person name="Hilgendorf A."/>
            <person name="Burgert H.G."/>
        </authorList>
    </citation>
    <scope>REVIEW</scope>
</reference>
<protein>
    <recommendedName>
        <fullName>Early 3 Conserved Region 1-alpha protein</fullName>
        <shortName>E3 CR1-alpha</shortName>
    </recommendedName>
    <alternativeName>
        <fullName>Early 3 6.7K protein</fullName>
        <shortName>E3-6.7k</shortName>
    </alternativeName>
</protein>
<keyword id="KW-0325">Glycoprotein</keyword>
<keyword id="KW-1032">Host cell membrane</keyword>
<keyword id="KW-1038">Host endoplasmic reticulum</keyword>
<keyword id="KW-1043">Host membrane</keyword>
<keyword id="KW-0945">Host-virus interaction</keyword>
<keyword id="KW-0472">Membrane</keyword>
<keyword id="KW-0812">Transmembrane</keyword>
<keyword id="KW-1133">Transmembrane helix</keyword>
<keyword id="KW-0899">Viral immunoevasion</keyword>
<organism>
    <name type="scientific">Human adenovirus C serotype 2</name>
    <name type="common">HAdV-2</name>
    <name type="synonym">Human adenovirus 2</name>
    <dbReference type="NCBI Taxonomy" id="10515"/>
    <lineage>
        <taxon>Viruses</taxon>
        <taxon>Varidnaviria</taxon>
        <taxon>Bamfordvirae</taxon>
        <taxon>Preplasmiviricota</taxon>
        <taxon>Tectiliviricetes</taxon>
        <taxon>Rowavirales</taxon>
        <taxon>Adenoviridae</taxon>
        <taxon>Mastadenovirus</taxon>
        <taxon>Human mastadenovirus C</taxon>
    </lineage>
</organism>
<dbReference type="EMBL" id="AJ293912">
    <property type="protein sequence ID" value="CAC67694.1"/>
    <property type="molecule type" value="Genomic_DNA"/>
</dbReference>
<dbReference type="EMBL" id="AJ293913">
    <property type="protein sequence ID" value="CAC67702.1"/>
    <property type="molecule type" value="Genomic_DNA"/>
</dbReference>
<dbReference type="EMBL" id="AJ293914">
    <property type="protein sequence ID" value="CAC67711.1"/>
    <property type="molecule type" value="Genomic_DNA"/>
</dbReference>
<dbReference type="EMBL" id="AJ293916">
    <property type="protein sequence ID" value="CAC67727.1"/>
    <property type="molecule type" value="Genomic_DNA"/>
</dbReference>
<dbReference type="EMBL" id="AJ293917">
    <property type="protein sequence ID" value="CAC67735.1"/>
    <property type="molecule type" value="Genomic_DNA"/>
</dbReference>
<dbReference type="RefSeq" id="AP_000183.1">
    <property type="nucleotide sequence ID" value="AC_000007.1"/>
</dbReference>
<dbReference type="SMR" id="Q910M3"/>
<dbReference type="GO" id="GO:0044167">
    <property type="term" value="C:host cell endoplasmic reticulum membrane"/>
    <property type="evidence" value="ECO:0007669"/>
    <property type="project" value="UniProtKB-SubCell"/>
</dbReference>
<dbReference type="GO" id="GO:0020002">
    <property type="term" value="C:host cell plasma membrane"/>
    <property type="evidence" value="ECO:0007669"/>
    <property type="project" value="UniProtKB-SubCell"/>
</dbReference>
<dbReference type="GO" id="GO:0016020">
    <property type="term" value="C:membrane"/>
    <property type="evidence" value="ECO:0007669"/>
    <property type="project" value="UniProtKB-KW"/>
</dbReference>
<organismHost>
    <name type="scientific">Homo sapiens</name>
    <name type="common">Human</name>
    <dbReference type="NCBI Taxonomy" id="9606"/>
</organismHost>
<evidence type="ECO:0000255" key="1"/>
<evidence type="ECO:0000269" key="2">
    <source>
    </source>
</evidence>
<evidence type="ECO:0000269" key="3">
    <source>
    </source>
</evidence>
<evidence type="ECO:0000269" key="4">
    <source>
    </source>
</evidence>
<evidence type="ECO:0000269" key="5">
    <source>
    </source>
</evidence>
<evidence type="ECO:0000305" key="6"/>